<proteinExistence type="inferred from homology"/>
<sequence>MSDIALTVSILALVAVVGLFIGNVKFRGVGLGIGGVLFGGIIVGHFVSQAGMTLSSDMLHVIQEFGLILFVYTIGIQVGPGFFASLRVSGLRLNLFAVLIVIIGGLVTAILHKLFDIPLPVVLGIFSGAVTNTPALGAGQQILRDLGTPMEMVDQMGMSYAMAYPFGICGILFTMWMLRVIFRVNVETEAQQHESTRTNGGALIRTINIRVENPNLHNLAIKDVPILNGDKVICSRLKREETLKVPSPETVIQLGDLLHLVGQPADLHNAQLVIGQEVDTSLSTKGTDLRVARVVVTNENVLGKRIRDLHFKERYDVVISRLNRAGVELVASSDISLQFGDILNLVGRPSAIDAVANVLGNAQQKLQQVQMLPVFIGIGLGVLLGSIPVFVPGFPAALKLGLAGGPLIMALILGRIGSIGKLYWFMPPSANLALRELGIVLFLSVVGLKSGGDFIHTLVDGEGLSWIGYGALITAVPLITVGILARMLAKMNYLTMCGMLAGSMTDPPALAFANNLHPTSGAAALSYATVYPLVMFLRIITPQLLAVLFWSIG</sequence>
<comment type="subcellular location">
    <subcellularLocation>
        <location evidence="1">Cell membrane</location>
        <topology evidence="1">Multi-pass membrane protein</topology>
    </subcellularLocation>
</comment>
<comment type="similarity">
    <text evidence="1">Belongs to the AAE transporter (TC 2.A.81) family. YidE subfamily.</text>
</comment>
<comment type="sequence caution" evidence="2">
    <conflict type="erroneous initiation">
        <sequence resource="EMBL-CDS" id="ABG71857"/>
    </conflict>
</comment>
<dbReference type="EMBL" id="CP000247">
    <property type="protein sequence ID" value="ABG71857.1"/>
    <property type="status" value="ALT_INIT"/>
    <property type="molecule type" value="Genomic_DNA"/>
</dbReference>
<dbReference type="RefSeq" id="WP_001279776.1">
    <property type="nucleotide sequence ID" value="NC_008253.1"/>
</dbReference>
<dbReference type="SMR" id="Q0TB22"/>
<dbReference type="KEGG" id="ecp:ECP_3886"/>
<dbReference type="HOGENOM" id="CLU_035023_3_1_6"/>
<dbReference type="Proteomes" id="UP000009182">
    <property type="component" value="Chromosome"/>
</dbReference>
<dbReference type="GO" id="GO:0005886">
    <property type="term" value="C:plasma membrane"/>
    <property type="evidence" value="ECO:0007669"/>
    <property type="project" value="UniProtKB-SubCell"/>
</dbReference>
<dbReference type="GO" id="GO:0008324">
    <property type="term" value="F:monoatomic cation transmembrane transporter activity"/>
    <property type="evidence" value="ECO:0007669"/>
    <property type="project" value="InterPro"/>
</dbReference>
<dbReference type="GO" id="GO:0006813">
    <property type="term" value="P:potassium ion transport"/>
    <property type="evidence" value="ECO:0007669"/>
    <property type="project" value="InterPro"/>
</dbReference>
<dbReference type="FunFam" id="3.30.70.1450:FF:000004">
    <property type="entry name" value="Putative transport protein YidE"/>
    <property type="match status" value="1"/>
</dbReference>
<dbReference type="Gene3D" id="3.30.70.1450">
    <property type="entry name" value="Regulator of K+ conductance, C-terminal domain"/>
    <property type="match status" value="2"/>
</dbReference>
<dbReference type="HAMAP" id="MF_01016">
    <property type="entry name" value="YidE"/>
    <property type="match status" value="1"/>
</dbReference>
<dbReference type="InterPro" id="IPR050144">
    <property type="entry name" value="AAE_transporter"/>
</dbReference>
<dbReference type="InterPro" id="IPR006037">
    <property type="entry name" value="RCK_C"/>
</dbReference>
<dbReference type="InterPro" id="IPR036721">
    <property type="entry name" value="RCK_C_sf"/>
</dbReference>
<dbReference type="InterPro" id="IPR023018">
    <property type="entry name" value="Transpt_YidE_put"/>
</dbReference>
<dbReference type="InterPro" id="IPR006512">
    <property type="entry name" value="YidE_YbjL"/>
</dbReference>
<dbReference type="NCBIfam" id="NF003007">
    <property type="entry name" value="PRK03818.1"/>
    <property type="match status" value="1"/>
</dbReference>
<dbReference type="NCBIfam" id="TIGR01625">
    <property type="entry name" value="YidE_YbjL_dupl"/>
    <property type="match status" value="2"/>
</dbReference>
<dbReference type="PANTHER" id="PTHR30445">
    <property type="entry name" value="K(+)_H(+) ANTIPORTER SUBUNIT KHTT"/>
    <property type="match status" value="1"/>
</dbReference>
<dbReference type="PANTHER" id="PTHR30445:SF3">
    <property type="entry name" value="TRANSPORT PROTEIN YIDE-RELATED"/>
    <property type="match status" value="1"/>
</dbReference>
<dbReference type="Pfam" id="PF06826">
    <property type="entry name" value="Asp-Al_Ex"/>
    <property type="match status" value="2"/>
</dbReference>
<dbReference type="Pfam" id="PF02080">
    <property type="entry name" value="TrkA_C"/>
    <property type="match status" value="2"/>
</dbReference>
<dbReference type="SUPFAM" id="SSF116726">
    <property type="entry name" value="TrkA C-terminal domain-like"/>
    <property type="match status" value="2"/>
</dbReference>
<dbReference type="PROSITE" id="PS51202">
    <property type="entry name" value="RCK_C"/>
    <property type="match status" value="2"/>
</dbReference>
<name>YIDE_ECOL5</name>
<gene>
    <name evidence="1" type="primary">yidE</name>
    <name type="ordered locus">ECP_3886</name>
</gene>
<keyword id="KW-1003">Cell membrane</keyword>
<keyword id="KW-0472">Membrane</keyword>
<keyword id="KW-0677">Repeat</keyword>
<keyword id="KW-0812">Transmembrane</keyword>
<keyword id="KW-1133">Transmembrane helix</keyword>
<keyword id="KW-0813">Transport</keyword>
<protein>
    <recommendedName>
        <fullName evidence="1">Putative transport protein YidE</fullName>
    </recommendedName>
</protein>
<reference key="1">
    <citation type="journal article" date="2006" name="Mol. Microbiol.">
        <title>Role of pathogenicity island-associated integrases in the genome plasticity of uropathogenic Escherichia coli strain 536.</title>
        <authorList>
            <person name="Hochhut B."/>
            <person name="Wilde C."/>
            <person name="Balling G."/>
            <person name="Middendorf B."/>
            <person name="Dobrindt U."/>
            <person name="Brzuszkiewicz E."/>
            <person name="Gottschalk G."/>
            <person name="Carniel E."/>
            <person name="Hacker J."/>
        </authorList>
    </citation>
    <scope>NUCLEOTIDE SEQUENCE [LARGE SCALE GENOMIC DNA]</scope>
    <source>
        <strain>536 / UPEC</strain>
    </source>
</reference>
<organism>
    <name type="scientific">Escherichia coli O6:K15:H31 (strain 536 / UPEC)</name>
    <dbReference type="NCBI Taxonomy" id="362663"/>
    <lineage>
        <taxon>Bacteria</taxon>
        <taxon>Pseudomonadati</taxon>
        <taxon>Pseudomonadota</taxon>
        <taxon>Gammaproteobacteria</taxon>
        <taxon>Enterobacterales</taxon>
        <taxon>Enterobacteriaceae</taxon>
        <taxon>Escherichia</taxon>
    </lineage>
</organism>
<evidence type="ECO:0000255" key="1">
    <source>
        <dbReference type="HAMAP-Rule" id="MF_01016"/>
    </source>
</evidence>
<evidence type="ECO:0000305" key="2"/>
<accession>Q0TB22</accession>
<feature type="chain" id="PRO_0000329160" description="Putative transport protein YidE">
    <location>
        <begin position="1"/>
        <end position="553"/>
    </location>
</feature>
<feature type="transmembrane region" description="Helical" evidence="1">
    <location>
        <begin position="4"/>
        <end position="24"/>
    </location>
</feature>
<feature type="transmembrane region" description="Helical" evidence="1">
    <location>
        <begin position="28"/>
        <end position="48"/>
    </location>
</feature>
<feature type="transmembrane region" description="Helical" evidence="1">
    <location>
        <begin position="65"/>
        <end position="85"/>
    </location>
</feature>
<feature type="transmembrane region" description="Helical" evidence="1">
    <location>
        <begin position="95"/>
        <end position="115"/>
    </location>
</feature>
<feature type="transmembrane region" description="Helical" evidence="1">
    <location>
        <begin position="158"/>
        <end position="178"/>
    </location>
</feature>
<feature type="transmembrane region" description="Helical" evidence="1">
    <location>
        <begin position="371"/>
        <end position="391"/>
    </location>
</feature>
<feature type="transmembrane region" description="Helical" evidence="1">
    <location>
        <begin position="393"/>
        <end position="413"/>
    </location>
</feature>
<feature type="transmembrane region" description="Helical" evidence="1">
    <location>
        <begin position="439"/>
        <end position="459"/>
    </location>
</feature>
<feature type="transmembrane region" description="Helical" evidence="1">
    <location>
        <begin position="464"/>
        <end position="484"/>
    </location>
</feature>
<feature type="transmembrane region" description="Helical" evidence="1">
    <location>
        <begin position="493"/>
        <end position="513"/>
    </location>
</feature>
<feature type="transmembrane region" description="Helical" evidence="1">
    <location>
        <begin position="533"/>
        <end position="553"/>
    </location>
</feature>
<feature type="domain" description="RCK C-terminal 1" evidence="1">
    <location>
        <begin position="191"/>
        <end position="276"/>
    </location>
</feature>
<feature type="domain" description="RCK C-terminal 2" evidence="1">
    <location>
        <begin position="279"/>
        <end position="361"/>
    </location>
</feature>